<protein>
    <recommendedName>
        <fullName evidence="1">Valine--tRNA ligase</fullName>
        <ecNumber evidence="1">6.1.1.9</ecNumber>
    </recommendedName>
    <alternativeName>
        <fullName evidence="1">Valyl-tRNA synthetase</fullName>
        <shortName evidence="1">ValRS</shortName>
    </alternativeName>
</protein>
<organism>
    <name type="scientific">Chlamydia muridarum (strain MoPn / Nigg)</name>
    <dbReference type="NCBI Taxonomy" id="243161"/>
    <lineage>
        <taxon>Bacteria</taxon>
        <taxon>Pseudomonadati</taxon>
        <taxon>Chlamydiota</taxon>
        <taxon>Chlamydiia</taxon>
        <taxon>Chlamydiales</taxon>
        <taxon>Chlamydiaceae</taxon>
        <taxon>Chlamydia/Chlamydophila group</taxon>
        <taxon>Chlamydia</taxon>
    </lineage>
</organism>
<dbReference type="EC" id="6.1.1.9" evidence="1"/>
<dbReference type="EMBL" id="AE002160">
    <property type="protein sequence ID" value="AAF39411.1"/>
    <property type="molecule type" value="Genomic_DNA"/>
</dbReference>
<dbReference type="PIR" id="H81686">
    <property type="entry name" value="H81686"/>
</dbReference>
<dbReference type="RefSeq" id="WP_010230885.1">
    <property type="nucleotide sequence ID" value="NZ_CP063055.1"/>
</dbReference>
<dbReference type="SMR" id="Q9PK91"/>
<dbReference type="GeneID" id="1245935"/>
<dbReference type="KEGG" id="cmu:TC_0576"/>
<dbReference type="eggNOG" id="COG0525">
    <property type="taxonomic scope" value="Bacteria"/>
</dbReference>
<dbReference type="HOGENOM" id="CLU_001493_0_2_0"/>
<dbReference type="OrthoDB" id="9810365at2"/>
<dbReference type="Proteomes" id="UP000000800">
    <property type="component" value="Chromosome"/>
</dbReference>
<dbReference type="GO" id="GO:0005829">
    <property type="term" value="C:cytosol"/>
    <property type="evidence" value="ECO:0007669"/>
    <property type="project" value="TreeGrafter"/>
</dbReference>
<dbReference type="GO" id="GO:0002161">
    <property type="term" value="F:aminoacyl-tRNA deacylase activity"/>
    <property type="evidence" value="ECO:0007669"/>
    <property type="project" value="InterPro"/>
</dbReference>
<dbReference type="GO" id="GO:0005524">
    <property type="term" value="F:ATP binding"/>
    <property type="evidence" value="ECO:0007669"/>
    <property type="project" value="UniProtKB-UniRule"/>
</dbReference>
<dbReference type="GO" id="GO:0004832">
    <property type="term" value="F:valine-tRNA ligase activity"/>
    <property type="evidence" value="ECO:0007669"/>
    <property type="project" value="UniProtKB-UniRule"/>
</dbReference>
<dbReference type="GO" id="GO:0006438">
    <property type="term" value="P:valyl-tRNA aminoacylation"/>
    <property type="evidence" value="ECO:0007669"/>
    <property type="project" value="UniProtKB-UniRule"/>
</dbReference>
<dbReference type="CDD" id="cd07962">
    <property type="entry name" value="Anticodon_Ia_Val"/>
    <property type="match status" value="1"/>
</dbReference>
<dbReference type="CDD" id="cd00817">
    <property type="entry name" value="ValRS_core"/>
    <property type="match status" value="1"/>
</dbReference>
<dbReference type="FunFam" id="3.40.50.620:FF:000032">
    <property type="entry name" value="Valine--tRNA ligase"/>
    <property type="match status" value="1"/>
</dbReference>
<dbReference type="FunFam" id="3.40.50.620:FF:000306">
    <property type="entry name" value="Valine--tRNA ligase"/>
    <property type="match status" value="1"/>
</dbReference>
<dbReference type="FunFam" id="3.90.740.10:FF:000010">
    <property type="entry name" value="Valine--tRNA ligase"/>
    <property type="match status" value="1"/>
</dbReference>
<dbReference type="Gene3D" id="3.40.50.620">
    <property type="entry name" value="HUPs"/>
    <property type="match status" value="2"/>
</dbReference>
<dbReference type="Gene3D" id="1.10.730.10">
    <property type="entry name" value="Isoleucyl-tRNA Synthetase, Domain 1"/>
    <property type="match status" value="1"/>
</dbReference>
<dbReference type="Gene3D" id="1.10.287.380">
    <property type="entry name" value="Valyl-tRNA synthetase, C-terminal domain"/>
    <property type="match status" value="1"/>
</dbReference>
<dbReference type="Gene3D" id="3.90.740.10">
    <property type="entry name" value="Valyl/Leucyl/Isoleucyl-tRNA synthetase, editing domain"/>
    <property type="match status" value="1"/>
</dbReference>
<dbReference type="HAMAP" id="MF_02004">
    <property type="entry name" value="Val_tRNA_synth_type1"/>
    <property type="match status" value="1"/>
</dbReference>
<dbReference type="InterPro" id="IPR001412">
    <property type="entry name" value="aa-tRNA-synth_I_CS"/>
</dbReference>
<dbReference type="InterPro" id="IPR002300">
    <property type="entry name" value="aa-tRNA-synth_Ia"/>
</dbReference>
<dbReference type="InterPro" id="IPR033705">
    <property type="entry name" value="Anticodon_Ia_Val"/>
</dbReference>
<dbReference type="InterPro" id="IPR013155">
    <property type="entry name" value="M/V/L/I-tRNA-synth_anticd-bd"/>
</dbReference>
<dbReference type="InterPro" id="IPR014729">
    <property type="entry name" value="Rossmann-like_a/b/a_fold"/>
</dbReference>
<dbReference type="InterPro" id="IPR010978">
    <property type="entry name" value="tRNA-bd_arm"/>
</dbReference>
<dbReference type="InterPro" id="IPR009080">
    <property type="entry name" value="tRNAsynth_Ia_anticodon-bd"/>
</dbReference>
<dbReference type="InterPro" id="IPR037118">
    <property type="entry name" value="Val-tRNA_synth_C_sf"/>
</dbReference>
<dbReference type="InterPro" id="IPR009008">
    <property type="entry name" value="Val/Leu/Ile-tRNA-synth_edit"/>
</dbReference>
<dbReference type="InterPro" id="IPR002303">
    <property type="entry name" value="Valyl-tRNA_ligase"/>
</dbReference>
<dbReference type="NCBIfam" id="NF004349">
    <property type="entry name" value="PRK05729.1"/>
    <property type="match status" value="1"/>
</dbReference>
<dbReference type="NCBIfam" id="TIGR00422">
    <property type="entry name" value="valS"/>
    <property type="match status" value="1"/>
</dbReference>
<dbReference type="PANTHER" id="PTHR11946:SF93">
    <property type="entry name" value="VALINE--TRNA LIGASE, CHLOROPLASTIC_MITOCHONDRIAL 2"/>
    <property type="match status" value="1"/>
</dbReference>
<dbReference type="PANTHER" id="PTHR11946">
    <property type="entry name" value="VALYL-TRNA SYNTHETASES"/>
    <property type="match status" value="1"/>
</dbReference>
<dbReference type="Pfam" id="PF08264">
    <property type="entry name" value="Anticodon_1"/>
    <property type="match status" value="1"/>
</dbReference>
<dbReference type="Pfam" id="PF00133">
    <property type="entry name" value="tRNA-synt_1"/>
    <property type="match status" value="2"/>
</dbReference>
<dbReference type="PRINTS" id="PR00986">
    <property type="entry name" value="TRNASYNTHVAL"/>
</dbReference>
<dbReference type="SUPFAM" id="SSF47323">
    <property type="entry name" value="Anticodon-binding domain of a subclass of class I aminoacyl-tRNA synthetases"/>
    <property type="match status" value="1"/>
</dbReference>
<dbReference type="SUPFAM" id="SSF52374">
    <property type="entry name" value="Nucleotidylyl transferase"/>
    <property type="match status" value="1"/>
</dbReference>
<dbReference type="SUPFAM" id="SSF46589">
    <property type="entry name" value="tRNA-binding arm"/>
    <property type="match status" value="1"/>
</dbReference>
<dbReference type="SUPFAM" id="SSF50677">
    <property type="entry name" value="ValRS/IleRS/LeuRS editing domain"/>
    <property type="match status" value="1"/>
</dbReference>
<dbReference type="PROSITE" id="PS00178">
    <property type="entry name" value="AA_TRNA_LIGASE_I"/>
    <property type="match status" value="1"/>
</dbReference>
<accession>Q9PK91</accession>
<name>SYV_CHLMU</name>
<evidence type="ECO:0000255" key="1">
    <source>
        <dbReference type="HAMAP-Rule" id="MF_02004"/>
    </source>
</evidence>
<reference key="1">
    <citation type="journal article" date="2000" name="Nucleic Acids Res.">
        <title>Genome sequences of Chlamydia trachomatis MoPn and Chlamydia pneumoniae AR39.</title>
        <authorList>
            <person name="Read T.D."/>
            <person name="Brunham R.C."/>
            <person name="Shen C."/>
            <person name="Gill S.R."/>
            <person name="Heidelberg J.F."/>
            <person name="White O."/>
            <person name="Hickey E.K."/>
            <person name="Peterson J.D."/>
            <person name="Utterback T.R."/>
            <person name="Berry K.J."/>
            <person name="Bass S."/>
            <person name="Linher K.D."/>
            <person name="Weidman J.F."/>
            <person name="Khouri H.M."/>
            <person name="Craven B."/>
            <person name="Bowman C."/>
            <person name="Dodson R.J."/>
            <person name="Gwinn M.L."/>
            <person name="Nelson W.C."/>
            <person name="DeBoy R.T."/>
            <person name="Kolonay J.F."/>
            <person name="McClarty G."/>
            <person name="Salzberg S.L."/>
            <person name="Eisen J.A."/>
            <person name="Fraser C.M."/>
        </authorList>
    </citation>
    <scope>NUCLEOTIDE SEQUENCE [LARGE SCALE GENOMIC DNA]</scope>
    <source>
        <strain>MoPn / Nigg</strain>
    </source>
</reference>
<feature type="chain" id="PRO_0000106220" description="Valine--tRNA ligase">
    <location>
        <begin position="1"/>
        <end position="939"/>
    </location>
</feature>
<feature type="coiled-coil region" evidence="1">
    <location>
        <begin position="873"/>
        <end position="939"/>
    </location>
</feature>
<feature type="short sequence motif" description="'HIGH' region">
    <location>
        <begin position="47"/>
        <end position="57"/>
    </location>
</feature>
<feature type="short sequence motif" description="'KMSKS' region">
    <location>
        <begin position="563"/>
        <end position="567"/>
    </location>
</feature>
<feature type="binding site" evidence="1">
    <location>
        <position position="566"/>
    </location>
    <ligand>
        <name>ATP</name>
        <dbReference type="ChEBI" id="CHEBI:30616"/>
    </ligand>
</feature>
<comment type="function">
    <text evidence="1">Catalyzes the attachment of valine to tRNA(Val). As ValRS can inadvertently accommodate and process structurally similar amino acids such as threonine, to avoid such errors, it has a 'posttransfer' editing activity that hydrolyzes mischarged Thr-tRNA(Val) in a tRNA-dependent manner.</text>
</comment>
<comment type="catalytic activity">
    <reaction evidence="1">
        <text>tRNA(Val) + L-valine + ATP = L-valyl-tRNA(Val) + AMP + diphosphate</text>
        <dbReference type="Rhea" id="RHEA:10704"/>
        <dbReference type="Rhea" id="RHEA-COMP:9672"/>
        <dbReference type="Rhea" id="RHEA-COMP:9708"/>
        <dbReference type="ChEBI" id="CHEBI:30616"/>
        <dbReference type="ChEBI" id="CHEBI:33019"/>
        <dbReference type="ChEBI" id="CHEBI:57762"/>
        <dbReference type="ChEBI" id="CHEBI:78442"/>
        <dbReference type="ChEBI" id="CHEBI:78537"/>
        <dbReference type="ChEBI" id="CHEBI:456215"/>
        <dbReference type="EC" id="6.1.1.9"/>
    </reaction>
</comment>
<comment type="subunit">
    <text evidence="1">Monomer.</text>
</comment>
<comment type="subcellular location">
    <subcellularLocation>
        <location evidence="1">Cytoplasm</location>
    </subcellularLocation>
</comment>
<comment type="domain">
    <text evidence="1">ValRS has two distinct active sites: one for aminoacylation and one for editing. The misactivated threonine is translocated from the active site to the editing site.</text>
</comment>
<comment type="domain">
    <text evidence="1">The C-terminal coiled-coil domain is crucial for aminoacylation activity.</text>
</comment>
<comment type="similarity">
    <text evidence="1">Belongs to the class-I aminoacyl-tRNA synthetase family. ValS type 1 subfamily.</text>
</comment>
<proteinExistence type="inferred from homology"/>
<gene>
    <name evidence="1" type="primary">valS</name>
    <name type="ordered locus">TC_0576</name>
</gene>
<keyword id="KW-0030">Aminoacyl-tRNA synthetase</keyword>
<keyword id="KW-0067">ATP-binding</keyword>
<keyword id="KW-0175">Coiled coil</keyword>
<keyword id="KW-0963">Cytoplasm</keyword>
<keyword id="KW-0436">Ligase</keyword>
<keyword id="KW-0547">Nucleotide-binding</keyword>
<keyword id="KW-0648">Protein biosynthesis</keyword>
<sequence length="939" mass="107122">MNEDQFPKAYDPKSSESGVYSFWERSGMFIADANSKKPAYSIVMPPPNVTGILHMGHALVNTLQDMLIRYKRMKGFEVCWVPGTDHAGIATQTVVERHLRSSLGKRRTDFSREEFLKHVWEWKEKSQNVILSQLRQLGCSCDWSRQRFTMDPEANRAVKKAFKVLFDKGVIYRGYYLVNWDPILQTALADDEVEYEEREGWLYYIRYPVVNSEEFITVATTRPETLLGDTAIAVSPEDERYSHLIGAKVIVPFVDREIPIIGDFSVDASFGTGAVKITPAHDKDDYRTGMNHRLPMINILTPTGEINENGGIFTGLAKESARENIITSLEALGLFVRKEAYSSRVGVSYRSGAIIEPYLSKQWFVSVDSFRESLREFVNSKEINLFPPEFIRNYLTWVNNLKDWCISRQLWWGHRIPVWHNKHDEEYVICFDGDGVPEEVAQDPESWYQDPDVLDTWFSSGLWPLTCFGWPEESADLRKFYPTSVLVTGHDILFFWVTRMVLMCSAMVDTKPFADVFLHGLIFGKSYKQYDDNGEWTYVSGDQKREYDKGKALPKNVVAKWEKLSKSKGNVIDPIEMIDMYGADAVRFTLCSCANRGEQIDLDYRLFEEYKNFVNKLWNGARFIFGHISELTSRDLEEGVNKDLLGLEDFYILDRFNELLALIDSHYNCYSFDKIAALAYDFFKNDLCSTYLEIIKPTLFGKQGNDEQRATKRKLLATLLVNILGVLHPIVPYITETLFQKIKTTLGVVGDGLGDAVTGHAVSMLRSEACMIAGYPQPIELSFPQGLRESFAIAEKLVYTIRNIRGEMQLDPRDLLQAFIISSEKKELLDACIPIMCALGGIKTIEQLSEAPKDCIFSLGVVEGIQVGVILPAEHLAKEHARLEKEKIRLENSIESLSKLLASEDFRTRANPNLVQAKEDALRNSRQELQSILDKIASL</sequence>